<comment type="function">
    <text>Catalyzes the conversion of caffeic acid to ferulic acid and of 5-hydroxyferulic acid to sinapic acid. The resulting products may subsequently be converted to the corresponding alcohols that are incorporated into lignins.</text>
</comment>
<comment type="catalytic activity">
    <reaction>
        <text>(E)-caffeate + S-adenosyl-L-methionine = (E)-ferulate + S-adenosyl-L-homocysteine + H(+)</text>
        <dbReference type="Rhea" id="RHEA:20225"/>
        <dbReference type="ChEBI" id="CHEBI:15378"/>
        <dbReference type="ChEBI" id="CHEBI:29749"/>
        <dbReference type="ChEBI" id="CHEBI:57770"/>
        <dbReference type="ChEBI" id="CHEBI:57856"/>
        <dbReference type="ChEBI" id="CHEBI:59789"/>
        <dbReference type="EC" id="2.1.1.68"/>
    </reaction>
</comment>
<comment type="pathway">
    <text>Aromatic compound metabolism; phenylpropanoid biosynthesis.</text>
</comment>
<comment type="subunit">
    <text evidence="1">Homodimer.</text>
</comment>
<comment type="similarity">
    <text evidence="2">Belongs to the class I-like SAM-binding methyltransferase superfamily. Cation-independent O-methyltransferase family. COMT subfamily.</text>
</comment>
<keyword id="KW-0438">Lignin biosynthesis</keyword>
<keyword id="KW-0489">Methyltransferase</keyword>
<keyword id="KW-0949">S-adenosyl-L-methionine</keyword>
<keyword id="KW-0808">Transferase</keyword>
<accession>O81646</accession>
<organism>
    <name type="scientific">Capsicum chinense</name>
    <name type="common">Scotch bonnet</name>
    <name type="synonym">Bonnet pepper</name>
    <dbReference type="NCBI Taxonomy" id="80379"/>
    <lineage>
        <taxon>Eukaryota</taxon>
        <taxon>Viridiplantae</taxon>
        <taxon>Streptophyta</taxon>
        <taxon>Embryophyta</taxon>
        <taxon>Tracheophyta</taxon>
        <taxon>Spermatophyta</taxon>
        <taxon>Magnoliopsida</taxon>
        <taxon>eudicotyledons</taxon>
        <taxon>Gunneridae</taxon>
        <taxon>Pentapetalae</taxon>
        <taxon>asterids</taxon>
        <taxon>lamiids</taxon>
        <taxon>Solanales</taxon>
        <taxon>Solanaceae</taxon>
        <taxon>Solanoideae</taxon>
        <taxon>Capsiceae</taxon>
        <taxon>Capsicum</taxon>
    </lineage>
</organism>
<dbReference type="EC" id="2.1.1.68"/>
<dbReference type="EMBL" id="AF081214">
    <property type="protein sequence ID" value="AAC78475.1"/>
    <property type="molecule type" value="mRNA"/>
</dbReference>
<dbReference type="SMR" id="O81646"/>
<dbReference type="BioCyc" id="MetaCyc:MONOMER-13528"/>
<dbReference type="UniPathway" id="UPA00711"/>
<dbReference type="GO" id="GO:0047763">
    <property type="term" value="F:caffeate O-methyltransferase activity"/>
    <property type="evidence" value="ECO:0007669"/>
    <property type="project" value="UniProtKB-EC"/>
</dbReference>
<dbReference type="GO" id="GO:0046983">
    <property type="term" value="F:protein dimerization activity"/>
    <property type="evidence" value="ECO:0007669"/>
    <property type="project" value="InterPro"/>
</dbReference>
<dbReference type="GO" id="GO:0009813">
    <property type="term" value="P:flavonoid biosynthetic process"/>
    <property type="evidence" value="ECO:0007669"/>
    <property type="project" value="UniProtKB-ARBA"/>
</dbReference>
<dbReference type="GO" id="GO:0009809">
    <property type="term" value="P:lignin biosynthetic process"/>
    <property type="evidence" value="ECO:0007669"/>
    <property type="project" value="UniProtKB-KW"/>
</dbReference>
<dbReference type="GO" id="GO:0032259">
    <property type="term" value="P:methylation"/>
    <property type="evidence" value="ECO:0007669"/>
    <property type="project" value="UniProtKB-KW"/>
</dbReference>
<dbReference type="CDD" id="cd02440">
    <property type="entry name" value="AdoMet_MTases"/>
    <property type="match status" value="1"/>
</dbReference>
<dbReference type="FunFam" id="1.10.10.10:FF:000357">
    <property type="entry name" value="Caffeic acid 3-O-methyltransferase"/>
    <property type="match status" value="1"/>
</dbReference>
<dbReference type="FunFam" id="3.40.50.150:FF:000061">
    <property type="entry name" value="Caffeic acid O-methyltransferase"/>
    <property type="match status" value="1"/>
</dbReference>
<dbReference type="Gene3D" id="3.40.50.150">
    <property type="entry name" value="Vaccinia Virus protein VP39"/>
    <property type="match status" value="1"/>
</dbReference>
<dbReference type="Gene3D" id="1.10.10.10">
    <property type="entry name" value="Winged helix-like DNA-binding domain superfamily/Winged helix DNA-binding domain"/>
    <property type="match status" value="1"/>
</dbReference>
<dbReference type="InterPro" id="IPR016461">
    <property type="entry name" value="COMT-like"/>
</dbReference>
<dbReference type="InterPro" id="IPR001077">
    <property type="entry name" value="O_MeTrfase_dom"/>
</dbReference>
<dbReference type="InterPro" id="IPR012967">
    <property type="entry name" value="Plant_O-MeTrfase_dimerisation"/>
</dbReference>
<dbReference type="InterPro" id="IPR029063">
    <property type="entry name" value="SAM-dependent_MTases_sf"/>
</dbReference>
<dbReference type="InterPro" id="IPR036388">
    <property type="entry name" value="WH-like_DNA-bd_sf"/>
</dbReference>
<dbReference type="InterPro" id="IPR036390">
    <property type="entry name" value="WH_DNA-bd_sf"/>
</dbReference>
<dbReference type="PANTHER" id="PTHR11746">
    <property type="entry name" value="O-METHYLTRANSFERASE"/>
    <property type="match status" value="1"/>
</dbReference>
<dbReference type="Pfam" id="PF08100">
    <property type="entry name" value="Dimerisation"/>
    <property type="match status" value="1"/>
</dbReference>
<dbReference type="Pfam" id="PF00891">
    <property type="entry name" value="Methyltransf_2"/>
    <property type="match status" value="1"/>
</dbReference>
<dbReference type="PIRSF" id="PIRSF005739">
    <property type="entry name" value="O-mtase"/>
    <property type="match status" value="1"/>
</dbReference>
<dbReference type="SUPFAM" id="SSF53335">
    <property type="entry name" value="S-adenosyl-L-methionine-dependent methyltransferases"/>
    <property type="match status" value="1"/>
</dbReference>
<dbReference type="SUPFAM" id="SSF46785">
    <property type="entry name" value="Winged helix' DNA-binding domain"/>
    <property type="match status" value="1"/>
</dbReference>
<dbReference type="PROSITE" id="PS51683">
    <property type="entry name" value="SAM_OMT_II"/>
    <property type="match status" value="1"/>
</dbReference>
<feature type="chain" id="PRO_0000063197" description="Caffeic acid 3-O-methyltransferase">
    <location>
        <begin position="1"/>
        <end position="359"/>
    </location>
</feature>
<feature type="region of interest" description="Substrate binding" evidence="1">
    <location>
        <begin position="158"/>
        <end position="176"/>
    </location>
</feature>
<feature type="active site" description="Proton acceptor" evidence="2">
    <location>
        <position position="265"/>
    </location>
</feature>
<feature type="binding site" evidence="1">
    <location>
        <begin position="126"/>
        <end position="132"/>
    </location>
    <ligand>
        <name>substrate</name>
    </ligand>
</feature>
<feature type="binding site" evidence="2">
    <location>
        <position position="204"/>
    </location>
    <ligand>
        <name>S-adenosyl-L-methionine</name>
        <dbReference type="ChEBI" id="CHEBI:59789"/>
    </ligand>
</feature>
<feature type="binding site" evidence="2">
    <location>
        <position position="227"/>
    </location>
    <ligand>
        <name>S-adenosyl-L-methionine</name>
        <dbReference type="ChEBI" id="CHEBI:59789"/>
    </ligand>
</feature>
<feature type="binding site" evidence="2">
    <location>
        <position position="247"/>
    </location>
    <ligand>
        <name>S-adenosyl-L-methionine</name>
        <dbReference type="ChEBI" id="CHEBI:59789"/>
    </ligand>
</feature>
<feature type="binding site" evidence="2">
    <location>
        <position position="248"/>
    </location>
    <ligand>
        <name>S-adenosyl-L-methionine</name>
        <dbReference type="ChEBI" id="CHEBI:59789"/>
    </ligand>
</feature>
<feature type="binding site" evidence="2">
    <location>
        <position position="261"/>
    </location>
    <ligand>
        <name>S-adenosyl-L-methionine</name>
        <dbReference type="ChEBI" id="CHEBI:59789"/>
    </ligand>
</feature>
<sequence length="359" mass="39636">MGSINQSLTQTEDEAFVFAMQLASASVLPMVLKATVELDLLEIMAKSGPGAFISPSELAAQLPTKNPEAPVMLDRMFRLLATYSVLNCTLRTLPDGRVERLYSLAPVCKFLTKNGDGVSIAPILLMNQDKVLMESWYHLTDAVLDGGVPFNKAYGMTTFEYHGTDPRFNKVFNCGMSDHTTLSMKKILEDYTGFEGLNSIVDVGGGTGATVNMIVSKYPSIKGINFDLPHVIRDAPSYPGVEQVGGDMFVSVPKADAIFMKWICHDWSDDHCIKLLKNCYEALPANGKVIIVECILPEAPDTSAATKSKVHGDIIMLAHNPGGKERTEKDFEALANWGWFSRFRKVCCAYHTWVMEFNK</sequence>
<proteinExistence type="evidence at transcript level"/>
<evidence type="ECO:0000250" key="1"/>
<evidence type="ECO:0000255" key="2">
    <source>
        <dbReference type="PROSITE-ProRule" id="PRU01020"/>
    </source>
</evidence>
<name>COMT1_CAPCH</name>
<reference key="1">
    <citation type="online journal article" date="1998" name="Plant Gene Register">
        <title>Nucleotide sequence of a caffeic acid 3-O-methyltransferase gene from Habanero Chile.</title>
        <authorList>
            <person name="Curry J."/>
            <person name="Mendoza M."/>
            <person name="O'Connell M."/>
        </authorList>
        <locator>PGR98-170</locator>
    </citation>
    <scope>NUCLEOTIDE SEQUENCE [MRNA]</scope>
    <source>
        <strain>cv. Habanero</strain>
    </source>
</reference>
<protein>
    <recommendedName>
        <fullName>Caffeic acid 3-O-methyltransferase</fullName>
        <shortName>CAOMT</shortName>
        <shortName>COMT</shortName>
        <ecNumber>2.1.1.68</ecNumber>
    </recommendedName>
    <alternativeName>
        <fullName>S-adenosysl-L-methionine:caffeic acid 3-O-methyltransferase</fullName>
    </alternativeName>
</protein>
<gene>
    <name type="primary">COMT</name>
</gene>